<keyword id="KW-0963">Cytoplasm</keyword>
<keyword id="KW-0648">Protein biosynthesis</keyword>
<keyword id="KW-1185">Reference proteome</keyword>
<proteinExistence type="inferred from homology"/>
<protein>
    <recommendedName>
        <fullName evidence="1">Ribosome-recycling factor</fullName>
        <shortName evidence="1">RRF</shortName>
    </recommendedName>
    <alternativeName>
        <fullName evidence="1">Ribosome-releasing factor</fullName>
    </alternativeName>
</protein>
<dbReference type="EMBL" id="CU234118">
    <property type="protein sequence ID" value="CAL77889.1"/>
    <property type="molecule type" value="Genomic_DNA"/>
</dbReference>
<dbReference type="RefSeq" id="WP_011927017.1">
    <property type="nucleotide sequence ID" value="NC_009445.1"/>
</dbReference>
<dbReference type="SMR" id="A4YVG3"/>
<dbReference type="STRING" id="114615.BRADO4137"/>
<dbReference type="KEGG" id="bra:BRADO4137"/>
<dbReference type="eggNOG" id="COG0233">
    <property type="taxonomic scope" value="Bacteria"/>
</dbReference>
<dbReference type="HOGENOM" id="CLU_073981_2_1_5"/>
<dbReference type="OrthoDB" id="9804006at2"/>
<dbReference type="Proteomes" id="UP000001994">
    <property type="component" value="Chromosome"/>
</dbReference>
<dbReference type="GO" id="GO:0005829">
    <property type="term" value="C:cytosol"/>
    <property type="evidence" value="ECO:0007669"/>
    <property type="project" value="GOC"/>
</dbReference>
<dbReference type="GO" id="GO:0043023">
    <property type="term" value="F:ribosomal large subunit binding"/>
    <property type="evidence" value="ECO:0007669"/>
    <property type="project" value="TreeGrafter"/>
</dbReference>
<dbReference type="GO" id="GO:0002184">
    <property type="term" value="P:cytoplasmic translational termination"/>
    <property type="evidence" value="ECO:0007669"/>
    <property type="project" value="TreeGrafter"/>
</dbReference>
<dbReference type="CDD" id="cd00520">
    <property type="entry name" value="RRF"/>
    <property type="match status" value="1"/>
</dbReference>
<dbReference type="FunFam" id="1.10.132.20:FF:000001">
    <property type="entry name" value="Ribosome-recycling factor"/>
    <property type="match status" value="1"/>
</dbReference>
<dbReference type="FunFam" id="3.30.1360.40:FF:000001">
    <property type="entry name" value="Ribosome-recycling factor"/>
    <property type="match status" value="1"/>
</dbReference>
<dbReference type="Gene3D" id="3.30.1360.40">
    <property type="match status" value="1"/>
</dbReference>
<dbReference type="Gene3D" id="1.10.132.20">
    <property type="entry name" value="Ribosome-recycling factor"/>
    <property type="match status" value="1"/>
</dbReference>
<dbReference type="HAMAP" id="MF_00040">
    <property type="entry name" value="RRF"/>
    <property type="match status" value="1"/>
</dbReference>
<dbReference type="InterPro" id="IPR002661">
    <property type="entry name" value="Ribosome_recyc_fac"/>
</dbReference>
<dbReference type="InterPro" id="IPR023584">
    <property type="entry name" value="Ribosome_recyc_fac_dom"/>
</dbReference>
<dbReference type="InterPro" id="IPR036191">
    <property type="entry name" value="RRF_sf"/>
</dbReference>
<dbReference type="NCBIfam" id="TIGR00496">
    <property type="entry name" value="frr"/>
    <property type="match status" value="1"/>
</dbReference>
<dbReference type="PANTHER" id="PTHR20982:SF3">
    <property type="entry name" value="MITOCHONDRIAL RIBOSOME RECYCLING FACTOR PSEUDO 1"/>
    <property type="match status" value="1"/>
</dbReference>
<dbReference type="PANTHER" id="PTHR20982">
    <property type="entry name" value="RIBOSOME RECYCLING FACTOR"/>
    <property type="match status" value="1"/>
</dbReference>
<dbReference type="Pfam" id="PF01765">
    <property type="entry name" value="RRF"/>
    <property type="match status" value="1"/>
</dbReference>
<dbReference type="SUPFAM" id="SSF55194">
    <property type="entry name" value="Ribosome recycling factor, RRF"/>
    <property type="match status" value="1"/>
</dbReference>
<feature type="chain" id="PRO_0000341003" description="Ribosome-recycling factor">
    <location>
        <begin position="1"/>
        <end position="187"/>
    </location>
</feature>
<sequence>MSTGNFDLNELKRRMQGATQALKHELGGLRTGRASASMVEPVQVEAYGSHMPLNQLATVSVPEPRLLSVQVWDRSMVKAVEKAIVDSNLGLSPATEGQVIRLRIPELNQERRKELVKVAHKYAEQARVAVRHVRRDGLDTLKKLEKNHEMSEDDQERLAGDVQKATDSVISEIDQLLAAKEKEILTV</sequence>
<organism>
    <name type="scientific">Bradyrhizobium sp. (strain ORS 278)</name>
    <dbReference type="NCBI Taxonomy" id="114615"/>
    <lineage>
        <taxon>Bacteria</taxon>
        <taxon>Pseudomonadati</taxon>
        <taxon>Pseudomonadota</taxon>
        <taxon>Alphaproteobacteria</taxon>
        <taxon>Hyphomicrobiales</taxon>
        <taxon>Nitrobacteraceae</taxon>
        <taxon>Bradyrhizobium</taxon>
    </lineage>
</organism>
<comment type="function">
    <text evidence="1">Responsible for the release of ribosomes from messenger RNA at the termination of protein biosynthesis. May increase the efficiency of translation by recycling ribosomes from one round of translation to another.</text>
</comment>
<comment type="subcellular location">
    <subcellularLocation>
        <location evidence="1">Cytoplasm</location>
    </subcellularLocation>
</comment>
<comment type="similarity">
    <text evidence="1">Belongs to the RRF family.</text>
</comment>
<gene>
    <name evidence="1" type="primary">frr</name>
    <name type="ordered locus">BRADO4137</name>
</gene>
<name>RRF_BRASO</name>
<accession>A4YVG3</accession>
<evidence type="ECO:0000255" key="1">
    <source>
        <dbReference type="HAMAP-Rule" id="MF_00040"/>
    </source>
</evidence>
<reference key="1">
    <citation type="journal article" date="2007" name="Science">
        <title>Legumes symbioses: absence of nod genes in photosynthetic bradyrhizobia.</title>
        <authorList>
            <person name="Giraud E."/>
            <person name="Moulin L."/>
            <person name="Vallenet D."/>
            <person name="Barbe V."/>
            <person name="Cytryn E."/>
            <person name="Avarre J.-C."/>
            <person name="Jaubert M."/>
            <person name="Simon D."/>
            <person name="Cartieaux F."/>
            <person name="Prin Y."/>
            <person name="Bena G."/>
            <person name="Hannibal L."/>
            <person name="Fardoux J."/>
            <person name="Kojadinovic M."/>
            <person name="Vuillet L."/>
            <person name="Lajus A."/>
            <person name="Cruveiller S."/>
            <person name="Rouy Z."/>
            <person name="Mangenot S."/>
            <person name="Segurens B."/>
            <person name="Dossat C."/>
            <person name="Franck W.L."/>
            <person name="Chang W.-S."/>
            <person name="Saunders E."/>
            <person name="Bruce D."/>
            <person name="Richardson P."/>
            <person name="Normand P."/>
            <person name="Dreyfus B."/>
            <person name="Pignol D."/>
            <person name="Stacey G."/>
            <person name="Emerich D."/>
            <person name="Vermeglio A."/>
            <person name="Medigue C."/>
            <person name="Sadowsky M."/>
        </authorList>
    </citation>
    <scope>NUCLEOTIDE SEQUENCE [LARGE SCALE GENOMIC DNA]</scope>
    <source>
        <strain>ORS 278</strain>
    </source>
</reference>